<proteinExistence type="inferred from homology"/>
<feature type="chain" id="PRO_0000286028" description="Aquaporin NIP1-3">
    <location>
        <begin position="1"/>
        <end position="286"/>
    </location>
</feature>
<feature type="transmembrane region" description="Helical; Name=1" evidence="2">
    <location>
        <begin position="56"/>
        <end position="76"/>
    </location>
</feature>
<feature type="transmembrane region" description="Helical; Name=2" evidence="2">
    <location>
        <begin position="84"/>
        <end position="104"/>
    </location>
</feature>
<feature type="transmembrane region" description="Helical; Name=3" evidence="2">
    <location>
        <begin position="131"/>
        <end position="153"/>
    </location>
</feature>
<feature type="transmembrane region" description="Helical; Name=4" evidence="2">
    <location>
        <begin position="172"/>
        <end position="192"/>
    </location>
</feature>
<feature type="transmembrane region" description="Helical; Name=5" evidence="2">
    <location>
        <begin position="200"/>
        <end position="220"/>
    </location>
</feature>
<feature type="transmembrane region" description="Helical; Name=6" evidence="2">
    <location>
        <begin position="239"/>
        <end position="259"/>
    </location>
</feature>
<feature type="region of interest" description="Disordered" evidence="3">
    <location>
        <begin position="1"/>
        <end position="44"/>
    </location>
</feature>
<feature type="short sequence motif" description="NPA 1">
    <location>
        <begin position="113"/>
        <end position="115"/>
    </location>
</feature>
<feature type="short sequence motif" description="NPA 2">
    <location>
        <begin position="225"/>
        <end position="227"/>
    </location>
</feature>
<feature type="compositionally biased region" description="Basic and acidic residues" evidence="3">
    <location>
        <begin position="11"/>
        <end position="31"/>
    </location>
</feature>
<feature type="compositionally biased region" description="Polar residues" evidence="3">
    <location>
        <begin position="34"/>
        <end position="44"/>
    </location>
</feature>
<feature type="splice variant" id="VSP_024949" description="In isoform 2." evidence="4">
    <original>PIS</original>
    <variation>YTS</variation>
    <location>
        <begin position="218"/>
        <end position="220"/>
    </location>
</feature>
<feature type="splice variant" id="VSP_024950" description="In isoform 2." evidence="4">
    <location>
        <begin position="221"/>
        <end position="286"/>
    </location>
</feature>
<comment type="function">
    <text evidence="1">Aquaporins facilitate the transport of water and small neutral solutes across cell membranes.</text>
</comment>
<comment type="subcellular location">
    <subcellularLocation>
        <location evidence="4">Membrane</location>
        <topology evidence="4">Multi-pass membrane protein</topology>
    </subcellularLocation>
</comment>
<comment type="alternative products">
    <event type="alternative splicing"/>
    <isoform>
        <id>Q0DK16-1</id>
        <name>1</name>
        <sequence type="displayed"/>
    </isoform>
    <isoform>
        <id>Q0DK16-2</id>
        <name>2</name>
        <sequence type="described" ref="VSP_024949 VSP_024950"/>
    </isoform>
</comment>
<comment type="domain">
    <text>Aquaporins contain two tandem repeats each containing three membrane-spanning domains and a pore-forming loop with the signature motif Asn-Pro-Ala (NPA).</text>
</comment>
<comment type="similarity">
    <text evidence="4">Belongs to the MIP/aquaporin (TC 1.A.8) family. NIP (TC 1.A.8.12) subfamily.</text>
</comment>
<comment type="sequence caution" evidence="4">
    <conflict type="erroneous gene model prediction">
        <sequence resource="EMBL-CDS" id="BAF16807"/>
    </conflict>
</comment>
<accession>Q0DK16</accession>
<accession>Q5W6J2</accession>
<gene>
    <name type="primary">NIP1-3</name>
    <name type="ordered locus">Os05g0205000</name>
    <name type="ordered locus">LOC_Os05g11560</name>
    <name type="ORF">OSJNBb0115F21.2</name>
</gene>
<reference key="1">
    <citation type="journal article" date="2005" name="Mol. Genet. Genomics">
        <title>A fine physical map of the rice chromosome 5.</title>
        <authorList>
            <person name="Cheng C.-H."/>
            <person name="Chung M.C."/>
            <person name="Liu S.-M."/>
            <person name="Chen S.-K."/>
            <person name="Kao F.Y."/>
            <person name="Lin S.-J."/>
            <person name="Hsiao S.-H."/>
            <person name="Tseng I.C."/>
            <person name="Hsing Y.-I.C."/>
            <person name="Wu H.-P."/>
            <person name="Chen C.-S."/>
            <person name="Shaw J.-F."/>
            <person name="Wu J."/>
            <person name="Matsumoto T."/>
            <person name="Sasaki T."/>
            <person name="Chen H.-C."/>
            <person name="Chow T.-Y."/>
        </authorList>
    </citation>
    <scope>NUCLEOTIDE SEQUENCE [LARGE SCALE GENOMIC DNA]</scope>
    <source>
        <strain>cv. Nipponbare</strain>
    </source>
</reference>
<reference key="2">
    <citation type="journal article" date="2005" name="Nature">
        <title>The map-based sequence of the rice genome.</title>
        <authorList>
            <consortium name="International rice genome sequencing project (IRGSP)"/>
        </authorList>
    </citation>
    <scope>NUCLEOTIDE SEQUENCE [LARGE SCALE GENOMIC DNA]</scope>
    <source>
        <strain>cv. Nipponbare</strain>
    </source>
</reference>
<reference key="3">
    <citation type="journal article" date="2008" name="Nucleic Acids Res.">
        <title>The rice annotation project database (RAP-DB): 2008 update.</title>
        <authorList>
            <consortium name="The rice annotation project (RAP)"/>
        </authorList>
    </citation>
    <scope>GENOME REANNOTATION</scope>
    <source>
        <strain>cv. Nipponbare</strain>
    </source>
</reference>
<reference key="4">
    <citation type="journal article" date="2013" name="Rice">
        <title>Improvement of the Oryza sativa Nipponbare reference genome using next generation sequence and optical map data.</title>
        <authorList>
            <person name="Kawahara Y."/>
            <person name="de la Bastide M."/>
            <person name="Hamilton J.P."/>
            <person name="Kanamori H."/>
            <person name="McCombie W.R."/>
            <person name="Ouyang S."/>
            <person name="Schwartz D.C."/>
            <person name="Tanaka T."/>
            <person name="Wu J."/>
            <person name="Zhou S."/>
            <person name="Childs K.L."/>
            <person name="Davidson R.M."/>
            <person name="Lin H."/>
            <person name="Quesada-Ocampo L."/>
            <person name="Vaillancourt B."/>
            <person name="Sakai H."/>
            <person name="Lee S.S."/>
            <person name="Kim J."/>
            <person name="Numa H."/>
            <person name="Itoh T."/>
            <person name="Buell C.R."/>
            <person name="Matsumoto T."/>
        </authorList>
    </citation>
    <scope>GENOME REANNOTATION</scope>
    <source>
        <strain>cv. Nipponbare</strain>
    </source>
</reference>
<reference key="5">
    <citation type="journal article" date="2005" name="Plant Cell Physiol.">
        <title>Identification of 33 rice aquaporin genes and analysis of their expression and function.</title>
        <authorList>
            <person name="Sakurai J."/>
            <person name="Ishikawa F."/>
            <person name="Yamaguchi T."/>
            <person name="Uemura M."/>
            <person name="Maeshima M."/>
        </authorList>
    </citation>
    <scope>NOMENCLATURE</scope>
</reference>
<sequence length="286" mass="30022">MAGGEHGVNGQHEETRAMEEGSRDHQARCENSEQDGGSKSSSNNHPMFSVQFAQKVIAEILGTFFLIFAGCAAVAVNKRTGGTVTFPGICITWGLAVMVMVYSVGHISGAHLNPAVTLAFATCGRFPWRRVPAYAAAQVAGSAAASAALRALFGGAPEHFFGTAPAGSDVQSLAMEFIITFYLMFVVSGVATDNRAIGELAGLAVGATVLVNVLFAGPISGASMNPARTIGPAIILGRYTGIWVYIAGPVFGAVAGAWAYNLIRFTDKPLREITMTASFIRSTRRN</sequence>
<protein>
    <recommendedName>
        <fullName>Aquaporin NIP1-3</fullName>
    </recommendedName>
    <alternativeName>
        <fullName>NOD26-like intrinsic protein 1-3</fullName>
    </alternativeName>
    <alternativeName>
        <fullName>OsNIP1;3</fullName>
    </alternativeName>
</protein>
<name>NIP13_ORYSJ</name>
<evidence type="ECO:0000250" key="1"/>
<evidence type="ECO:0000255" key="2"/>
<evidence type="ECO:0000256" key="3">
    <source>
        <dbReference type="SAM" id="MobiDB-lite"/>
    </source>
</evidence>
<evidence type="ECO:0000305" key="4"/>
<organism>
    <name type="scientific">Oryza sativa subsp. japonica</name>
    <name type="common">Rice</name>
    <dbReference type="NCBI Taxonomy" id="39947"/>
    <lineage>
        <taxon>Eukaryota</taxon>
        <taxon>Viridiplantae</taxon>
        <taxon>Streptophyta</taxon>
        <taxon>Embryophyta</taxon>
        <taxon>Tracheophyta</taxon>
        <taxon>Spermatophyta</taxon>
        <taxon>Magnoliopsida</taxon>
        <taxon>Liliopsida</taxon>
        <taxon>Poales</taxon>
        <taxon>Poaceae</taxon>
        <taxon>BOP clade</taxon>
        <taxon>Oryzoideae</taxon>
        <taxon>Oryzeae</taxon>
        <taxon>Oryzinae</taxon>
        <taxon>Oryza</taxon>
        <taxon>Oryza sativa</taxon>
    </lineage>
</organism>
<dbReference type="EMBL" id="AC135918">
    <property type="protein sequence ID" value="AAV44140.1"/>
    <property type="molecule type" value="Genomic_DNA"/>
</dbReference>
<dbReference type="EMBL" id="AP008211">
    <property type="protein sequence ID" value="BAF16807.1"/>
    <property type="status" value="ALT_SEQ"/>
    <property type="molecule type" value="Genomic_DNA"/>
</dbReference>
<dbReference type="EMBL" id="AP014961">
    <property type="status" value="NOT_ANNOTATED_CDS"/>
    <property type="molecule type" value="Genomic_DNA"/>
</dbReference>
<dbReference type="RefSeq" id="XP_015637523.1">
    <molecule id="Q0DK16-1"/>
    <property type="nucleotide sequence ID" value="XM_015782037.1"/>
</dbReference>
<dbReference type="SMR" id="Q0DK16"/>
<dbReference type="FunCoup" id="Q0DK16">
    <property type="interactions" value="16"/>
</dbReference>
<dbReference type="STRING" id="39947.Q0DK16"/>
<dbReference type="PaxDb" id="39947-Q0DK16"/>
<dbReference type="KEGG" id="dosa:Os05g0205000"/>
<dbReference type="KEGG" id="osa:4338071"/>
<dbReference type="eggNOG" id="KOG0223">
    <property type="taxonomic scope" value="Eukaryota"/>
</dbReference>
<dbReference type="HOGENOM" id="CLU_020019_3_1_1"/>
<dbReference type="InParanoid" id="Q0DK16"/>
<dbReference type="OrthoDB" id="3222at2759"/>
<dbReference type="Proteomes" id="UP000000763">
    <property type="component" value="Chromosome 5"/>
</dbReference>
<dbReference type="Proteomes" id="UP000059680">
    <property type="component" value="Chromosome 5"/>
</dbReference>
<dbReference type="GO" id="GO:0016020">
    <property type="term" value="C:membrane"/>
    <property type="evidence" value="ECO:0007669"/>
    <property type="project" value="UniProtKB-SubCell"/>
</dbReference>
<dbReference type="GO" id="GO:0015267">
    <property type="term" value="F:channel activity"/>
    <property type="evidence" value="ECO:0007669"/>
    <property type="project" value="InterPro"/>
</dbReference>
<dbReference type="CDD" id="cd00333">
    <property type="entry name" value="MIP"/>
    <property type="match status" value="1"/>
</dbReference>
<dbReference type="Gene3D" id="1.20.1080.10">
    <property type="entry name" value="Glycerol uptake facilitator protein"/>
    <property type="match status" value="1"/>
</dbReference>
<dbReference type="InterPro" id="IPR023271">
    <property type="entry name" value="Aquaporin-like"/>
</dbReference>
<dbReference type="InterPro" id="IPR034294">
    <property type="entry name" value="Aquaporin_transptr"/>
</dbReference>
<dbReference type="InterPro" id="IPR000425">
    <property type="entry name" value="MIP"/>
</dbReference>
<dbReference type="InterPro" id="IPR022357">
    <property type="entry name" value="MIP_CS"/>
</dbReference>
<dbReference type="NCBIfam" id="TIGR00861">
    <property type="entry name" value="MIP"/>
    <property type="match status" value="1"/>
</dbReference>
<dbReference type="PANTHER" id="PTHR45724:SF22">
    <property type="entry name" value="AQUAPORIN NIP1-3"/>
    <property type="match status" value="1"/>
</dbReference>
<dbReference type="PANTHER" id="PTHR45724">
    <property type="entry name" value="AQUAPORIN NIP2-1"/>
    <property type="match status" value="1"/>
</dbReference>
<dbReference type="Pfam" id="PF00230">
    <property type="entry name" value="MIP"/>
    <property type="match status" value="1"/>
</dbReference>
<dbReference type="PRINTS" id="PR00783">
    <property type="entry name" value="MINTRINSICP"/>
</dbReference>
<dbReference type="SUPFAM" id="SSF81338">
    <property type="entry name" value="Aquaporin-like"/>
    <property type="match status" value="1"/>
</dbReference>
<dbReference type="PROSITE" id="PS00221">
    <property type="entry name" value="MIP"/>
    <property type="match status" value="1"/>
</dbReference>
<keyword id="KW-0025">Alternative splicing</keyword>
<keyword id="KW-0472">Membrane</keyword>
<keyword id="KW-1185">Reference proteome</keyword>
<keyword id="KW-0677">Repeat</keyword>
<keyword id="KW-0812">Transmembrane</keyword>
<keyword id="KW-1133">Transmembrane helix</keyword>
<keyword id="KW-0813">Transport</keyword>